<protein>
    <recommendedName>
        <fullName evidence="1">7-cyano-7-deazaguanine synthase</fullName>
        <ecNumber evidence="1">6.3.4.20</ecNumber>
    </recommendedName>
    <alternativeName>
        <fullName evidence="1">7-cyano-7-carbaguanine synthase</fullName>
    </alternativeName>
    <alternativeName>
        <fullName evidence="1">PreQ(0) synthase</fullName>
    </alternativeName>
    <alternativeName>
        <fullName evidence="1">Queuosine biosynthesis protein QueC</fullName>
    </alternativeName>
</protein>
<dbReference type="EC" id="6.3.4.20" evidence="1"/>
<dbReference type="EMBL" id="CP000458">
    <property type="protein sequence ID" value="ABK09867.1"/>
    <property type="molecule type" value="Genomic_DNA"/>
</dbReference>
<dbReference type="RefSeq" id="WP_011546481.1">
    <property type="nucleotide sequence ID" value="NC_008542.1"/>
</dbReference>
<dbReference type="SMR" id="A0KBJ0"/>
<dbReference type="GeneID" id="83049916"/>
<dbReference type="KEGG" id="bch:Bcen2424_3119"/>
<dbReference type="HOGENOM" id="CLU_081854_0_0_4"/>
<dbReference type="UniPathway" id="UPA00391"/>
<dbReference type="GO" id="GO:0005524">
    <property type="term" value="F:ATP binding"/>
    <property type="evidence" value="ECO:0007669"/>
    <property type="project" value="UniProtKB-UniRule"/>
</dbReference>
<dbReference type="GO" id="GO:0016879">
    <property type="term" value="F:ligase activity, forming carbon-nitrogen bonds"/>
    <property type="evidence" value="ECO:0007669"/>
    <property type="project" value="UniProtKB-UniRule"/>
</dbReference>
<dbReference type="GO" id="GO:0008270">
    <property type="term" value="F:zinc ion binding"/>
    <property type="evidence" value="ECO:0007669"/>
    <property type="project" value="UniProtKB-UniRule"/>
</dbReference>
<dbReference type="GO" id="GO:0008616">
    <property type="term" value="P:queuosine biosynthetic process"/>
    <property type="evidence" value="ECO:0007669"/>
    <property type="project" value="UniProtKB-UniRule"/>
</dbReference>
<dbReference type="CDD" id="cd01995">
    <property type="entry name" value="QueC-like"/>
    <property type="match status" value="1"/>
</dbReference>
<dbReference type="Gene3D" id="3.40.50.620">
    <property type="entry name" value="HUPs"/>
    <property type="match status" value="1"/>
</dbReference>
<dbReference type="HAMAP" id="MF_01633">
    <property type="entry name" value="QueC"/>
    <property type="match status" value="1"/>
</dbReference>
<dbReference type="InterPro" id="IPR018317">
    <property type="entry name" value="QueC"/>
</dbReference>
<dbReference type="InterPro" id="IPR014729">
    <property type="entry name" value="Rossmann-like_a/b/a_fold"/>
</dbReference>
<dbReference type="NCBIfam" id="TIGR00364">
    <property type="entry name" value="7-cyano-7-deazaguanine synthase QueC"/>
    <property type="match status" value="1"/>
</dbReference>
<dbReference type="PANTHER" id="PTHR42914">
    <property type="entry name" value="7-CYANO-7-DEAZAGUANINE SYNTHASE"/>
    <property type="match status" value="1"/>
</dbReference>
<dbReference type="PANTHER" id="PTHR42914:SF1">
    <property type="entry name" value="7-CYANO-7-DEAZAGUANINE SYNTHASE"/>
    <property type="match status" value="1"/>
</dbReference>
<dbReference type="Pfam" id="PF06508">
    <property type="entry name" value="QueC"/>
    <property type="match status" value="1"/>
</dbReference>
<dbReference type="PIRSF" id="PIRSF006293">
    <property type="entry name" value="ExsB"/>
    <property type="match status" value="1"/>
</dbReference>
<dbReference type="SUPFAM" id="SSF52402">
    <property type="entry name" value="Adenine nucleotide alpha hydrolases-like"/>
    <property type="match status" value="1"/>
</dbReference>
<organism>
    <name type="scientific">Burkholderia cenocepacia (strain HI2424)</name>
    <dbReference type="NCBI Taxonomy" id="331272"/>
    <lineage>
        <taxon>Bacteria</taxon>
        <taxon>Pseudomonadati</taxon>
        <taxon>Pseudomonadota</taxon>
        <taxon>Betaproteobacteria</taxon>
        <taxon>Burkholderiales</taxon>
        <taxon>Burkholderiaceae</taxon>
        <taxon>Burkholderia</taxon>
        <taxon>Burkholderia cepacia complex</taxon>
    </lineage>
</organism>
<gene>
    <name evidence="1" type="primary">queC</name>
    <name type="ordered locus">Bcen2424_3119</name>
</gene>
<sequence length="244" mass="27260">MIRTDAKDGALVLFSGGQDSATCVAWALERYQTVETLGFDYGQRHRVELECREGVREALKHRFPAWSDRLGDDHMIDLSVLGAISDTAMTRTIEIETTANGLPNTFVPGRNLMFMTIAAAIAYRRGLRVLVGGMCETDFSGYPDCRDDTMKALQVALNLGMDTRMVLETPLMWLDKAQTWQLAEQLGGEALVELIRVETHTCYVGERAELHDWGFGCGECPACKLRKRGYEAYLKGERVTEAPL</sequence>
<accession>A0KBJ0</accession>
<proteinExistence type="inferred from homology"/>
<comment type="function">
    <text evidence="1">Catalyzes the ATP-dependent conversion of 7-carboxy-7-deazaguanine (CDG) to 7-cyano-7-deazaguanine (preQ(0)).</text>
</comment>
<comment type="catalytic activity">
    <reaction evidence="1">
        <text>7-carboxy-7-deazaguanine + NH4(+) + ATP = 7-cyano-7-deazaguanine + ADP + phosphate + H2O + H(+)</text>
        <dbReference type="Rhea" id="RHEA:27982"/>
        <dbReference type="ChEBI" id="CHEBI:15377"/>
        <dbReference type="ChEBI" id="CHEBI:15378"/>
        <dbReference type="ChEBI" id="CHEBI:28938"/>
        <dbReference type="ChEBI" id="CHEBI:30616"/>
        <dbReference type="ChEBI" id="CHEBI:43474"/>
        <dbReference type="ChEBI" id="CHEBI:45075"/>
        <dbReference type="ChEBI" id="CHEBI:61036"/>
        <dbReference type="ChEBI" id="CHEBI:456216"/>
        <dbReference type="EC" id="6.3.4.20"/>
    </reaction>
</comment>
<comment type="cofactor">
    <cofactor evidence="1">
        <name>Zn(2+)</name>
        <dbReference type="ChEBI" id="CHEBI:29105"/>
    </cofactor>
    <text evidence="1">Binds 1 zinc ion per subunit.</text>
</comment>
<comment type="pathway">
    <text evidence="1">Purine metabolism; 7-cyano-7-deazaguanine biosynthesis.</text>
</comment>
<comment type="similarity">
    <text evidence="1">Belongs to the QueC family.</text>
</comment>
<name>QUEC_BURCH</name>
<reference key="1">
    <citation type="submission" date="2006-08" db="EMBL/GenBank/DDBJ databases">
        <title>Complete sequence of chromosome 1 of Burkholderia cenocepacia HI2424.</title>
        <authorList>
            <person name="Copeland A."/>
            <person name="Lucas S."/>
            <person name="Lapidus A."/>
            <person name="Barry K."/>
            <person name="Detter J.C."/>
            <person name="Glavina del Rio T."/>
            <person name="Hammon N."/>
            <person name="Israni S."/>
            <person name="Pitluck S."/>
            <person name="Chain P."/>
            <person name="Malfatti S."/>
            <person name="Shin M."/>
            <person name="Vergez L."/>
            <person name="Schmutz J."/>
            <person name="Larimer F."/>
            <person name="Land M."/>
            <person name="Hauser L."/>
            <person name="Kyrpides N."/>
            <person name="Kim E."/>
            <person name="LiPuma J.J."/>
            <person name="Gonzalez C.F."/>
            <person name="Konstantinidis K."/>
            <person name="Tiedje J.M."/>
            <person name="Richardson P."/>
        </authorList>
    </citation>
    <scope>NUCLEOTIDE SEQUENCE [LARGE SCALE GENOMIC DNA]</scope>
    <source>
        <strain>HI2424</strain>
    </source>
</reference>
<feature type="chain" id="PRO_1000069752" description="7-cyano-7-deazaguanine synthase">
    <location>
        <begin position="1"/>
        <end position="244"/>
    </location>
</feature>
<feature type="binding site" evidence="1">
    <location>
        <begin position="14"/>
        <end position="24"/>
    </location>
    <ligand>
        <name>ATP</name>
        <dbReference type="ChEBI" id="CHEBI:30616"/>
    </ligand>
</feature>
<feature type="binding site" evidence="1">
    <location>
        <position position="202"/>
    </location>
    <ligand>
        <name>Zn(2+)</name>
        <dbReference type="ChEBI" id="CHEBI:29105"/>
    </ligand>
</feature>
<feature type="binding site" evidence="1">
    <location>
        <position position="217"/>
    </location>
    <ligand>
        <name>Zn(2+)</name>
        <dbReference type="ChEBI" id="CHEBI:29105"/>
    </ligand>
</feature>
<feature type="binding site" evidence="1">
    <location>
        <position position="220"/>
    </location>
    <ligand>
        <name>Zn(2+)</name>
        <dbReference type="ChEBI" id="CHEBI:29105"/>
    </ligand>
</feature>
<feature type="binding site" evidence="1">
    <location>
        <position position="223"/>
    </location>
    <ligand>
        <name>Zn(2+)</name>
        <dbReference type="ChEBI" id="CHEBI:29105"/>
    </ligand>
</feature>
<evidence type="ECO:0000255" key="1">
    <source>
        <dbReference type="HAMAP-Rule" id="MF_01633"/>
    </source>
</evidence>
<keyword id="KW-0067">ATP-binding</keyword>
<keyword id="KW-0436">Ligase</keyword>
<keyword id="KW-0479">Metal-binding</keyword>
<keyword id="KW-0547">Nucleotide-binding</keyword>
<keyword id="KW-0671">Queuosine biosynthesis</keyword>
<keyword id="KW-0862">Zinc</keyword>